<proteinExistence type="inferred from homology"/>
<evidence type="ECO:0000255" key="1">
    <source>
        <dbReference type="HAMAP-Rule" id="MF_00218"/>
    </source>
</evidence>
<comment type="function">
    <text evidence="1">Catalyzes the decarboxylation of four acetate groups of uroporphyrinogen-III to yield coproporphyrinogen-III.</text>
</comment>
<comment type="catalytic activity">
    <reaction evidence="1">
        <text>uroporphyrinogen III + 4 H(+) = coproporphyrinogen III + 4 CO2</text>
        <dbReference type="Rhea" id="RHEA:19865"/>
        <dbReference type="ChEBI" id="CHEBI:15378"/>
        <dbReference type="ChEBI" id="CHEBI:16526"/>
        <dbReference type="ChEBI" id="CHEBI:57308"/>
        <dbReference type="ChEBI" id="CHEBI:57309"/>
        <dbReference type="EC" id="4.1.1.37"/>
    </reaction>
</comment>
<comment type="pathway">
    <text evidence="1">Porphyrin-containing compound metabolism; protoporphyrin-IX biosynthesis; coproporphyrinogen-III from 5-aminolevulinate: step 4/4.</text>
</comment>
<comment type="subunit">
    <text evidence="1">Homodimer.</text>
</comment>
<comment type="subcellular location">
    <subcellularLocation>
        <location evidence="1">Cytoplasm</location>
    </subcellularLocation>
</comment>
<comment type="similarity">
    <text evidence="1">Belongs to the uroporphyrinogen decarboxylase family.</text>
</comment>
<dbReference type="EC" id="4.1.1.37" evidence="1"/>
<dbReference type="EMBL" id="CP000872">
    <property type="protein sequence ID" value="ABX63096.1"/>
    <property type="molecule type" value="Genomic_DNA"/>
</dbReference>
<dbReference type="RefSeq" id="WP_002965130.1">
    <property type="nucleotide sequence ID" value="NC_010103.1"/>
</dbReference>
<dbReference type="SMR" id="A9M9E9"/>
<dbReference type="GeneID" id="93017623"/>
<dbReference type="KEGG" id="bcs:BCAN_A2112"/>
<dbReference type="HOGENOM" id="CLU_040933_0_0_5"/>
<dbReference type="PhylomeDB" id="A9M9E9"/>
<dbReference type="UniPathway" id="UPA00251">
    <property type="reaction ID" value="UER00321"/>
</dbReference>
<dbReference type="Proteomes" id="UP000001385">
    <property type="component" value="Chromosome I"/>
</dbReference>
<dbReference type="GO" id="GO:0005829">
    <property type="term" value="C:cytosol"/>
    <property type="evidence" value="ECO:0007669"/>
    <property type="project" value="TreeGrafter"/>
</dbReference>
<dbReference type="GO" id="GO:0004853">
    <property type="term" value="F:uroporphyrinogen decarboxylase activity"/>
    <property type="evidence" value="ECO:0007669"/>
    <property type="project" value="UniProtKB-UniRule"/>
</dbReference>
<dbReference type="GO" id="GO:0019353">
    <property type="term" value="P:protoporphyrinogen IX biosynthetic process from glutamate"/>
    <property type="evidence" value="ECO:0007669"/>
    <property type="project" value="TreeGrafter"/>
</dbReference>
<dbReference type="CDD" id="cd00717">
    <property type="entry name" value="URO-D"/>
    <property type="match status" value="1"/>
</dbReference>
<dbReference type="FunFam" id="3.20.20.210:FF:000007">
    <property type="entry name" value="Uroporphyrinogen decarboxylase"/>
    <property type="match status" value="1"/>
</dbReference>
<dbReference type="Gene3D" id="3.20.20.210">
    <property type="match status" value="1"/>
</dbReference>
<dbReference type="HAMAP" id="MF_00218">
    <property type="entry name" value="URO_D"/>
    <property type="match status" value="1"/>
</dbReference>
<dbReference type="InterPro" id="IPR038071">
    <property type="entry name" value="UROD/MetE-like_sf"/>
</dbReference>
<dbReference type="InterPro" id="IPR006361">
    <property type="entry name" value="Uroporphyrinogen_deCO2ase_HemE"/>
</dbReference>
<dbReference type="InterPro" id="IPR000257">
    <property type="entry name" value="Uroporphyrinogen_deCOase"/>
</dbReference>
<dbReference type="NCBIfam" id="TIGR01464">
    <property type="entry name" value="hemE"/>
    <property type="match status" value="1"/>
</dbReference>
<dbReference type="PANTHER" id="PTHR21091">
    <property type="entry name" value="METHYLTETRAHYDROFOLATE:HOMOCYSTEINE METHYLTRANSFERASE RELATED"/>
    <property type="match status" value="1"/>
</dbReference>
<dbReference type="PANTHER" id="PTHR21091:SF169">
    <property type="entry name" value="UROPORPHYRINOGEN DECARBOXYLASE"/>
    <property type="match status" value="1"/>
</dbReference>
<dbReference type="Pfam" id="PF01208">
    <property type="entry name" value="URO-D"/>
    <property type="match status" value="1"/>
</dbReference>
<dbReference type="SUPFAM" id="SSF51726">
    <property type="entry name" value="UROD/MetE-like"/>
    <property type="match status" value="1"/>
</dbReference>
<dbReference type="PROSITE" id="PS00906">
    <property type="entry name" value="UROD_1"/>
    <property type="match status" value="1"/>
</dbReference>
<dbReference type="PROSITE" id="PS00907">
    <property type="entry name" value="UROD_2"/>
    <property type="match status" value="1"/>
</dbReference>
<sequence>MNRKVLKVIDGETVFPPPIWMMRQAGRYLPEYRETRKKAGSFLDLCYSPDLAVEVTLQPIRRFGFDAAILFSDILVVPHALGRDLRFEEGKGPLMTPIDADEIFWLETEGVAKRLEPVYETVRLVREQLPDETTLLGFCGAPWTVATYMIAGHGTPDQAPARLFAYRFPEAFEKLLNDLADVSAEYLIEQLGAGADAVQIFDSWSGVLDEDCFERFCIRPVARIVQKVRAVYPQARIIGFPKGAGMLYAGYREKTGVDMLGLDWSVPLSFAALLQEEGAVQGNLDPLRVVAGGNALDEGVDAILERMGQGPLVFNLGHGITPQAPIENVQRMIDRVRGGKS</sequence>
<name>DCUP_BRUC2</name>
<protein>
    <recommendedName>
        <fullName evidence="1">Uroporphyrinogen decarboxylase</fullName>
        <shortName evidence="1">UPD</shortName>
        <shortName evidence="1">URO-D</shortName>
        <ecNumber evidence="1">4.1.1.37</ecNumber>
    </recommendedName>
</protein>
<organism>
    <name type="scientific">Brucella canis (strain ATCC 23365 / NCTC 10854 / RM-666)</name>
    <dbReference type="NCBI Taxonomy" id="483179"/>
    <lineage>
        <taxon>Bacteria</taxon>
        <taxon>Pseudomonadati</taxon>
        <taxon>Pseudomonadota</taxon>
        <taxon>Alphaproteobacteria</taxon>
        <taxon>Hyphomicrobiales</taxon>
        <taxon>Brucellaceae</taxon>
        <taxon>Brucella/Ochrobactrum group</taxon>
        <taxon>Brucella</taxon>
    </lineage>
</organism>
<accession>A9M9E9</accession>
<gene>
    <name evidence="1" type="primary">hemE</name>
    <name type="ordered locus">BCAN_A2112</name>
</gene>
<keyword id="KW-0963">Cytoplasm</keyword>
<keyword id="KW-0210">Decarboxylase</keyword>
<keyword id="KW-0456">Lyase</keyword>
<keyword id="KW-0627">Porphyrin biosynthesis</keyword>
<keyword id="KW-1185">Reference proteome</keyword>
<feature type="chain" id="PRO_1000078066" description="Uroporphyrinogen decarboxylase">
    <location>
        <begin position="1"/>
        <end position="341"/>
    </location>
</feature>
<feature type="binding site" evidence="1">
    <location>
        <begin position="23"/>
        <end position="27"/>
    </location>
    <ligand>
        <name>substrate</name>
    </ligand>
</feature>
<feature type="binding site" evidence="1">
    <location>
        <position position="73"/>
    </location>
    <ligand>
        <name>substrate</name>
    </ligand>
</feature>
<feature type="binding site" evidence="1">
    <location>
        <position position="148"/>
    </location>
    <ligand>
        <name>substrate</name>
    </ligand>
</feature>
<feature type="binding site" evidence="1">
    <location>
        <position position="203"/>
    </location>
    <ligand>
        <name>substrate</name>
    </ligand>
</feature>
<feature type="binding site" evidence="1">
    <location>
        <position position="318"/>
    </location>
    <ligand>
        <name>substrate</name>
    </ligand>
</feature>
<feature type="site" description="Transition state stabilizer" evidence="1">
    <location>
        <position position="73"/>
    </location>
</feature>
<reference key="1">
    <citation type="submission" date="2007-10" db="EMBL/GenBank/DDBJ databases">
        <title>Brucella canis ATCC 23365 whole genome shotgun sequencing project.</title>
        <authorList>
            <person name="Setubal J.C."/>
            <person name="Bowns C."/>
            <person name="Boyle S."/>
            <person name="Crasta O.R."/>
            <person name="Czar M.J."/>
            <person name="Dharmanolla C."/>
            <person name="Gillespie J.J."/>
            <person name="Kenyon R.W."/>
            <person name="Lu J."/>
            <person name="Mane S."/>
            <person name="Mohapatra S."/>
            <person name="Nagrani S."/>
            <person name="Purkayastha A."/>
            <person name="Rajasimha H.K."/>
            <person name="Shallom J.M."/>
            <person name="Shallom S."/>
            <person name="Shukla M."/>
            <person name="Snyder E.E."/>
            <person name="Sobral B.W."/>
            <person name="Wattam A.R."/>
            <person name="Will R."/>
            <person name="Williams K."/>
            <person name="Yoo H."/>
            <person name="Bruce D."/>
            <person name="Detter C."/>
            <person name="Munk C."/>
            <person name="Brettin T.S."/>
        </authorList>
    </citation>
    <scope>NUCLEOTIDE SEQUENCE [LARGE SCALE GENOMIC DNA]</scope>
    <source>
        <strain>ATCC 23365 / NCTC 10854 / RM-666</strain>
    </source>
</reference>